<reference key="1">
    <citation type="submission" date="2007-07" db="EMBL/GenBank/DDBJ databases">
        <title>Complete sequence of chromosome of Shewanella baltica OS185.</title>
        <authorList>
            <consortium name="US DOE Joint Genome Institute"/>
            <person name="Copeland A."/>
            <person name="Lucas S."/>
            <person name="Lapidus A."/>
            <person name="Barry K."/>
            <person name="Glavina del Rio T."/>
            <person name="Dalin E."/>
            <person name="Tice H."/>
            <person name="Pitluck S."/>
            <person name="Sims D."/>
            <person name="Brettin T."/>
            <person name="Bruce D."/>
            <person name="Detter J.C."/>
            <person name="Han C."/>
            <person name="Schmutz J."/>
            <person name="Larimer F."/>
            <person name="Land M."/>
            <person name="Hauser L."/>
            <person name="Kyrpides N."/>
            <person name="Mikhailova N."/>
            <person name="Brettar I."/>
            <person name="Rodrigues J."/>
            <person name="Konstantinidis K."/>
            <person name="Tiedje J."/>
            <person name="Richardson P."/>
        </authorList>
    </citation>
    <scope>NUCLEOTIDE SEQUENCE [LARGE SCALE GENOMIC DNA]</scope>
    <source>
        <strain>OS185</strain>
    </source>
</reference>
<dbReference type="EC" id="2.7.7.77" evidence="1"/>
<dbReference type="EMBL" id="CP000753">
    <property type="protein sequence ID" value="ABS10434.1"/>
    <property type="molecule type" value="Genomic_DNA"/>
</dbReference>
<dbReference type="RefSeq" id="WP_012090644.1">
    <property type="nucleotide sequence ID" value="NC_009665.1"/>
</dbReference>
<dbReference type="SMR" id="A6WUE5"/>
<dbReference type="KEGG" id="sbm:Shew185_4320"/>
<dbReference type="HOGENOM" id="CLU_055597_5_1_6"/>
<dbReference type="GO" id="GO:0005737">
    <property type="term" value="C:cytoplasm"/>
    <property type="evidence" value="ECO:0007669"/>
    <property type="project" value="UniProtKB-SubCell"/>
</dbReference>
<dbReference type="GO" id="GO:0005525">
    <property type="term" value="F:GTP binding"/>
    <property type="evidence" value="ECO:0007669"/>
    <property type="project" value="UniProtKB-UniRule"/>
</dbReference>
<dbReference type="GO" id="GO:0046872">
    <property type="term" value="F:metal ion binding"/>
    <property type="evidence" value="ECO:0007669"/>
    <property type="project" value="UniProtKB-KW"/>
</dbReference>
<dbReference type="GO" id="GO:0061603">
    <property type="term" value="F:molybdenum cofactor guanylyltransferase activity"/>
    <property type="evidence" value="ECO:0007669"/>
    <property type="project" value="UniProtKB-EC"/>
</dbReference>
<dbReference type="GO" id="GO:1902758">
    <property type="term" value="P:bis(molybdopterin guanine dinucleotide)molybdenum biosynthetic process"/>
    <property type="evidence" value="ECO:0007669"/>
    <property type="project" value="TreeGrafter"/>
</dbReference>
<dbReference type="CDD" id="cd02503">
    <property type="entry name" value="MobA"/>
    <property type="match status" value="1"/>
</dbReference>
<dbReference type="Gene3D" id="3.90.550.10">
    <property type="entry name" value="Spore Coat Polysaccharide Biosynthesis Protein SpsA, Chain A"/>
    <property type="match status" value="1"/>
</dbReference>
<dbReference type="HAMAP" id="MF_00316">
    <property type="entry name" value="MobA"/>
    <property type="match status" value="1"/>
</dbReference>
<dbReference type="InterPro" id="IPR025877">
    <property type="entry name" value="MobA-like_NTP_Trfase"/>
</dbReference>
<dbReference type="InterPro" id="IPR013482">
    <property type="entry name" value="Molybde_CF_guanTrfase"/>
</dbReference>
<dbReference type="InterPro" id="IPR029044">
    <property type="entry name" value="Nucleotide-diphossugar_trans"/>
</dbReference>
<dbReference type="NCBIfam" id="TIGR02665">
    <property type="entry name" value="molyb_mobA"/>
    <property type="match status" value="1"/>
</dbReference>
<dbReference type="PANTHER" id="PTHR19136">
    <property type="entry name" value="MOLYBDENUM COFACTOR GUANYLYLTRANSFERASE"/>
    <property type="match status" value="1"/>
</dbReference>
<dbReference type="PANTHER" id="PTHR19136:SF81">
    <property type="entry name" value="MOLYBDENUM COFACTOR GUANYLYLTRANSFERASE"/>
    <property type="match status" value="1"/>
</dbReference>
<dbReference type="Pfam" id="PF12804">
    <property type="entry name" value="NTP_transf_3"/>
    <property type="match status" value="1"/>
</dbReference>
<dbReference type="SUPFAM" id="SSF53448">
    <property type="entry name" value="Nucleotide-diphospho-sugar transferases"/>
    <property type="match status" value="1"/>
</dbReference>
<protein>
    <recommendedName>
        <fullName evidence="1">Molybdenum cofactor guanylyltransferase</fullName>
        <shortName evidence="1">MoCo guanylyltransferase</shortName>
        <ecNumber evidence="1">2.7.7.77</ecNumber>
    </recommendedName>
    <alternativeName>
        <fullName evidence="1">GTP:molybdopterin guanylyltransferase</fullName>
    </alternativeName>
    <alternativeName>
        <fullName evidence="1">Mo-MPT guanylyltransferase</fullName>
    </alternativeName>
    <alternativeName>
        <fullName evidence="1">Molybdopterin guanylyltransferase</fullName>
    </alternativeName>
    <alternativeName>
        <fullName evidence="1">Molybdopterin-guanine dinucleotide synthase</fullName>
        <shortName evidence="1">MGD synthase</shortName>
    </alternativeName>
</protein>
<gene>
    <name evidence="1" type="primary">mobA</name>
    <name type="ordered locus">Shew185_4320</name>
</gene>
<proteinExistence type="inferred from homology"/>
<evidence type="ECO:0000255" key="1">
    <source>
        <dbReference type="HAMAP-Rule" id="MF_00316"/>
    </source>
</evidence>
<feature type="chain" id="PRO_1000019147" description="Molybdenum cofactor guanylyltransferase">
    <location>
        <begin position="1"/>
        <end position="196"/>
    </location>
</feature>
<feature type="binding site" evidence="1">
    <location>
        <begin position="10"/>
        <end position="12"/>
    </location>
    <ligand>
        <name>GTP</name>
        <dbReference type="ChEBI" id="CHEBI:37565"/>
    </ligand>
</feature>
<feature type="binding site" evidence="1">
    <location>
        <position position="23"/>
    </location>
    <ligand>
        <name>GTP</name>
        <dbReference type="ChEBI" id="CHEBI:37565"/>
    </ligand>
</feature>
<feature type="binding site" evidence="1">
    <location>
        <position position="51"/>
    </location>
    <ligand>
        <name>GTP</name>
        <dbReference type="ChEBI" id="CHEBI:37565"/>
    </ligand>
</feature>
<feature type="binding site" evidence="1">
    <location>
        <position position="69"/>
    </location>
    <ligand>
        <name>GTP</name>
        <dbReference type="ChEBI" id="CHEBI:37565"/>
    </ligand>
</feature>
<feature type="binding site" evidence="1">
    <location>
        <position position="99"/>
    </location>
    <ligand>
        <name>GTP</name>
        <dbReference type="ChEBI" id="CHEBI:37565"/>
    </ligand>
</feature>
<feature type="binding site" evidence="1">
    <location>
        <position position="99"/>
    </location>
    <ligand>
        <name>Mg(2+)</name>
        <dbReference type="ChEBI" id="CHEBI:18420"/>
    </ligand>
</feature>
<sequence length="196" mass="21661">MSSQIDAVILAGGMARRMGGDDKGLVELNGEAMIKHTIDRIKPQVKEILINANRNQTRYAEFGFKVISDEHTGFLGPLAGMITAMGQTDADYLLVVPCDCPLLPTDLVPRMLAAIKAENAELAVASDGEYEQPVVLLLKPSLRDSMKAFLEAGERKVDFWYAKHHFVVESFADQPNAFVNVNTPEQKQRLAMEITK</sequence>
<comment type="function">
    <text evidence="1">Transfers a GMP moiety from GTP to Mo-molybdopterin (Mo-MPT) cofactor (Moco or molybdenum cofactor) to form Mo-molybdopterin guanine dinucleotide (Mo-MGD) cofactor.</text>
</comment>
<comment type="catalytic activity">
    <reaction evidence="1">
        <text>Mo-molybdopterin + GTP + H(+) = Mo-molybdopterin guanine dinucleotide + diphosphate</text>
        <dbReference type="Rhea" id="RHEA:34243"/>
        <dbReference type="ChEBI" id="CHEBI:15378"/>
        <dbReference type="ChEBI" id="CHEBI:33019"/>
        <dbReference type="ChEBI" id="CHEBI:37565"/>
        <dbReference type="ChEBI" id="CHEBI:71302"/>
        <dbReference type="ChEBI" id="CHEBI:71310"/>
        <dbReference type="EC" id="2.7.7.77"/>
    </reaction>
</comment>
<comment type="cofactor">
    <cofactor evidence="1">
        <name>Mg(2+)</name>
        <dbReference type="ChEBI" id="CHEBI:18420"/>
    </cofactor>
</comment>
<comment type="subunit">
    <text evidence="1">Monomer.</text>
</comment>
<comment type="subcellular location">
    <subcellularLocation>
        <location evidence="1">Cytoplasm</location>
    </subcellularLocation>
</comment>
<comment type="domain">
    <text evidence="1">The N-terminal domain determines nucleotide recognition and specific binding, while the C-terminal domain determines the specific binding to the target protein.</text>
</comment>
<comment type="similarity">
    <text evidence="1">Belongs to the MobA family.</text>
</comment>
<keyword id="KW-0963">Cytoplasm</keyword>
<keyword id="KW-0342">GTP-binding</keyword>
<keyword id="KW-0460">Magnesium</keyword>
<keyword id="KW-0479">Metal-binding</keyword>
<keyword id="KW-0501">Molybdenum cofactor biosynthesis</keyword>
<keyword id="KW-0547">Nucleotide-binding</keyword>
<keyword id="KW-0808">Transferase</keyword>
<organism>
    <name type="scientific">Shewanella baltica (strain OS185)</name>
    <dbReference type="NCBI Taxonomy" id="402882"/>
    <lineage>
        <taxon>Bacteria</taxon>
        <taxon>Pseudomonadati</taxon>
        <taxon>Pseudomonadota</taxon>
        <taxon>Gammaproteobacteria</taxon>
        <taxon>Alteromonadales</taxon>
        <taxon>Shewanellaceae</taxon>
        <taxon>Shewanella</taxon>
    </lineage>
</organism>
<accession>A6WUE5</accession>
<name>MOBA_SHEB8</name>